<gene>
    <name type="primary">GPR174</name>
    <name type="ORF">FKSG79</name>
    <name type="ORF">GPCR17</name>
</gene>
<dbReference type="EMBL" id="AF345567">
    <property type="protein sequence ID" value="AAK29070.1"/>
    <property type="molecule type" value="mRNA"/>
</dbReference>
<dbReference type="EMBL" id="AB083599">
    <property type="protein sequence ID" value="BAB89312.1"/>
    <property type="molecule type" value="Genomic_DNA"/>
</dbReference>
<dbReference type="EMBL" id="AY242133">
    <property type="protein sequence ID" value="AAO92300.1"/>
    <property type="molecule type" value="Genomic_DNA"/>
</dbReference>
<dbReference type="EMBL" id="AL590222">
    <property type="status" value="NOT_ANNOTATED_CDS"/>
    <property type="molecule type" value="Genomic_DNA"/>
</dbReference>
<dbReference type="EMBL" id="BC104922">
    <property type="protein sequence ID" value="AAI04923.1"/>
    <property type="molecule type" value="mRNA"/>
</dbReference>
<dbReference type="EMBL" id="BC104924">
    <property type="protein sequence ID" value="AAI04925.1"/>
    <property type="molecule type" value="mRNA"/>
</dbReference>
<dbReference type="CCDS" id="CCDS14443.1"/>
<dbReference type="RefSeq" id="NP_115942.1">
    <property type="nucleotide sequence ID" value="NM_032553.3"/>
</dbReference>
<dbReference type="RefSeq" id="XP_047298535.1">
    <property type="nucleotide sequence ID" value="XM_047442579.1"/>
</dbReference>
<dbReference type="RefSeq" id="XP_047298536.1">
    <property type="nucleotide sequence ID" value="XM_047442580.1"/>
</dbReference>
<dbReference type="PDB" id="7XV3">
    <property type="method" value="EM"/>
    <property type="resolution" value="2.76 A"/>
    <property type="chains" value="R=1-333"/>
</dbReference>
<dbReference type="PDB" id="8IZB">
    <property type="method" value="EM"/>
    <property type="resolution" value="3.06 A"/>
    <property type="chains" value="R=1-309"/>
</dbReference>
<dbReference type="PDB" id="8KH5">
    <property type="method" value="EM"/>
    <property type="resolution" value="2.83 A"/>
    <property type="chains" value="A=2-328"/>
</dbReference>
<dbReference type="PDBsum" id="7XV3"/>
<dbReference type="PDBsum" id="8IZB"/>
<dbReference type="PDBsum" id="8KH5"/>
<dbReference type="EMDB" id="EMD-33479"/>
<dbReference type="EMDB" id="EMD-35838"/>
<dbReference type="EMDB" id="EMD-37237"/>
<dbReference type="SMR" id="Q9BXC1"/>
<dbReference type="FunCoup" id="Q9BXC1">
    <property type="interactions" value="316"/>
</dbReference>
<dbReference type="IntAct" id="Q9BXC1">
    <property type="interactions" value="1"/>
</dbReference>
<dbReference type="STRING" id="9606.ENSP00000494310"/>
<dbReference type="BindingDB" id="Q9BXC1"/>
<dbReference type="ChEMBL" id="CHEMBL3562167"/>
<dbReference type="GuidetoPHARMACOLOGY" id="145"/>
<dbReference type="GlyCosmos" id="Q9BXC1">
    <property type="glycosylation" value="2 sites, No reported glycans"/>
</dbReference>
<dbReference type="GlyGen" id="Q9BXC1">
    <property type="glycosylation" value="2 sites"/>
</dbReference>
<dbReference type="iPTMnet" id="Q9BXC1"/>
<dbReference type="PhosphoSitePlus" id="Q9BXC1"/>
<dbReference type="BioMuta" id="GPR174"/>
<dbReference type="DMDM" id="21263618"/>
<dbReference type="MassIVE" id="Q9BXC1"/>
<dbReference type="PaxDb" id="9606-ENSP00000276077"/>
<dbReference type="PeptideAtlas" id="Q9BXC1"/>
<dbReference type="ProteomicsDB" id="79403"/>
<dbReference type="Antibodypedia" id="14113">
    <property type="antibodies" value="254 antibodies from 29 providers"/>
</dbReference>
<dbReference type="DNASU" id="84636"/>
<dbReference type="Ensembl" id="ENST00000645147.2">
    <property type="protein sequence ID" value="ENSP00000494310.1"/>
    <property type="gene ID" value="ENSG00000147138.3"/>
</dbReference>
<dbReference type="GeneID" id="84636"/>
<dbReference type="KEGG" id="hsa:84636"/>
<dbReference type="MANE-Select" id="ENST00000645147.2">
    <property type="protein sequence ID" value="ENSP00000494310.1"/>
    <property type="RefSeq nucleotide sequence ID" value="NM_032553.3"/>
    <property type="RefSeq protein sequence ID" value="NP_115942.1"/>
</dbReference>
<dbReference type="UCSC" id="uc004edg.1">
    <property type="organism name" value="human"/>
</dbReference>
<dbReference type="AGR" id="HGNC:30245"/>
<dbReference type="CTD" id="84636"/>
<dbReference type="DisGeNET" id="84636"/>
<dbReference type="GeneCards" id="GPR174"/>
<dbReference type="HGNC" id="HGNC:30245">
    <property type="gene designation" value="GPR174"/>
</dbReference>
<dbReference type="HPA" id="ENSG00000147138">
    <property type="expression patterns" value="Tissue enriched (lymphoid)"/>
</dbReference>
<dbReference type="MIM" id="300903">
    <property type="type" value="gene"/>
</dbReference>
<dbReference type="neXtProt" id="NX_Q9BXC1"/>
<dbReference type="OpenTargets" id="ENSG00000147138"/>
<dbReference type="PharmGKB" id="PA134971573"/>
<dbReference type="VEuPathDB" id="HostDB:ENSG00000147138"/>
<dbReference type="eggNOG" id="ENOG502QSC0">
    <property type="taxonomic scope" value="Eukaryota"/>
</dbReference>
<dbReference type="GeneTree" id="ENSGT01030000234518"/>
<dbReference type="HOGENOM" id="CLU_009579_8_2_1"/>
<dbReference type="InParanoid" id="Q9BXC1"/>
<dbReference type="OMA" id="YLFLMHP"/>
<dbReference type="OrthoDB" id="9435792at2759"/>
<dbReference type="PAN-GO" id="Q9BXC1">
    <property type="GO annotations" value="4 GO annotations based on evolutionary models"/>
</dbReference>
<dbReference type="PhylomeDB" id="Q9BXC1"/>
<dbReference type="TreeFam" id="TF350009"/>
<dbReference type="PathwayCommons" id="Q9BXC1"/>
<dbReference type="SignaLink" id="Q9BXC1"/>
<dbReference type="SIGNOR" id="Q9BXC1"/>
<dbReference type="BioGRID-ORCS" id="84636">
    <property type="hits" value="10 hits in 762 CRISPR screens"/>
</dbReference>
<dbReference type="GeneWiki" id="GPR174"/>
<dbReference type="GenomeRNAi" id="84636"/>
<dbReference type="Pharos" id="Q9BXC1">
    <property type="development level" value="Tchem"/>
</dbReference>
<dbReference type="PRO" id="PR:Q9BXC1"/>
<dbReference type="Proteomes" id="UP000005640">
    <property type="component" value="Chromosome X"/>
</dbReference>
<dbReference type="RNAct" id="Q9BXC1">
    <property type="molecule type" value="protein"/>
</dbReference>
<dbReference type="Bgee" id="ENSG00000147138">
    <property type="expression patterns" value="Expressed in thymus and 92 other cell types or tissues"/>
</dbReference>
<dbReference type="GO" id="GO:0034451">
    <property type="term" value="C:centriolar satellite"/>
    <property type="evidence" value="ECO:0000314"/>
    <property type="project" value="HPA"/>
</dbReference>
<dbReference type="GO" id="GO:0043231">
    <property type="term" value="C:intracellular membrane-bounded organelle"/>
    <property type="evidence" value="ECO:0000314"/>
    <property type="project" value="HPA"/>
</dbReference>
<dbReference type="GO" id="GO:0005886">
    <property type="term" value="C:plasma membrane"/>
    <property type="evidence" value="ECO:0000314"/>
    <property type="project" value="HPA"/>
</dbReference>
<dbReference type="GO" id="GO:0045125">
    <property type="term" value="F:bioactive lipid receptor activity"/>
    <property type="evidence" value="ECO:0007669"/>
    <property type="project" value="Ensembl"/>
</dbReference>
<dbReference type="GO" id="GO:0004930">
    <property type="term" value="F:G protein-coupled receptor activity"/>
    <property type="evidence" value="ECO:0000314"/>
    <property type="project" value="UniProt"/>
</dbReference>
<dbReference type="GO" id="GO:0007186">
    <property type="term" value="P:G protein-coupled receptor signaling pathway"/>
    <property type="evidence" value="ECO:0000318"/>
    <property type="project" value="GO_Central"/>
</dbReference>
<dbReference type="GO" id="GO:0032703">
    <property type="term" value="P:negative regulation of interleukin-2 production"/>
    <property type="evidence" value="ECO:0000314"/>
    <property type="project" value="UniProt"/>
</dbReference>
<dbReference type="GO" id="GO:0043029">
    <property type="term" value="P:T cell homeostasis"/>
    <property type="evidence" value="ECO:0007669"/>
    <property type="project" value="Ensembl"/>
</dbReference>
<dbReference type="CDD" id="cd15152">
    <property type="entry name" value="7tmA_GPR174-like"/>
    <property type="match status" value="1"/>
</dbReference>
<dbReference type="FunFam" id="1.20.1070.10:FF:000167">
    <property type="entry name" value="probable G-protein coupled receptor 174"/>
    <property type="match status" value="1"/>
</dbReference>
<dbReference type="Gene3D" id="1.20.1070.10">
    <property type="entry name" value="Rhodopsin 7-helix transmembrane proteins"/>
    <property type="match status" value="1"/>
</dbReference>
<dbReference type="InterPro" id="IPR000276">
    <property type="entry name" value="GPCR_Rhodpsn"/>
</dbReference>
<dbReference type="InterPro" id="IPR017452">
    <property type="entry name" value="GPCR_Rhodpsn_7TM"/>
</dbReference>
<dbReference type="InterPro" id="IPR047836">
    <property type="entry name" value="GPR174_7tmA"/>
</dbReference>
<dbReference type="PANTHER" id="PTHR24232">
    <property type="entry name" value="G-PROTEIN COUPLED RECEPTOR"/>
    <property type="match status" value="1"/>
</dbReference>
<dbReference type="PANTHER" id="PTHR24232:SF86">
    <property type="entry name" value="G-PROTEIN COUPLED RECEPTOR 174-RELATED"/>
    <property type="match status" value="1"/>
</dbReference>
<dbReference type="Pfam" id="PF00001">
    <property type="entry name" value="7tm_1"/>
    <property type="match status" value="1"/>
</dbReference>
<dbReference type="PRINTS" id="PR00237">
    <property type="entry name" value="GPCRRHODOPSN"/>
</dbReference>
<dbReference type="PRINTS" id="PR01157">
    <property type="entry name" value="P2YPURNOCPTR"/>
</dbReference>
<dbReference type="SUPFAM" id="SSF81321">
    <property type="entry name" value="Family A G protein-coupled receptor-like"/>
    <property type="match status" value="1"/>
</dbReference>
<dbReference type="PROSITE" id="PS50262">
    <property type="entry name" value="G_PROTEIN_RECEP_F1_2"/>
    <property type="match status" value="1"/>
</dbReference>
<protein>
    <recommendedName>
        <fullName>Probable G-protein coupled receptor 174</fullName>
    </recommendedName>
</protein>
<sequence length="333" mass="38503">MPANYTCTRPDGDNTDFRYFIYAVTYTVILVPGLIGNILALWVFYGYMKETKRAVIFMINLAIADLLQVLSLPLRIFYYLNHDWPFGPGLCMFCFYLKYVNMYASIYFLVCISVRRFWFLMYPFRFHDCKQKYDLYISIAGWLIICLACVLFPLLRTSDDTSGNRTKCFVDLPTRNVNLAQSVVMMTIGELIGFVTPLLIVLYCTWKTVLSLQDKYPMAQDLGEKQKALKMILTCAGVFLICFAPYHFSFPLDFLVKSNEIKSCLARRVILIFHSVALCLASLNSCLDPVIYYFSTNEFRRRLSRQDLHDSIQLHAKSFVSNHTASTMTPELC</sequence>
<comment type="function">
    <text evidence="1 4">G-protein-coupled receptor of lysophosphatidylserine (LysoPS) that plays different roles in immune response (PubMed:36823105). Plays a negative role in regulatory T-cell accumulation and homeostasis. Under inflammatory conditions where LysoPS production increases, contributes to the down-regulation of regulatory T-cell activity to favor effector response. Mediates the suppression of IL-2 production in activated T-lymphocytes leading to inhibition of growth, proliferation and differentiation of T-cells. Mechanistically, acts via G(s)-containing heterotrimeric G proteins to trigger elevated cyclic AMP levels and protein kinase A/PKA activity, which may in turn act to antagonize proximal TCR signaling. Plays an important role in the initial period of sepsis through the regulation of macrophage polarization and pro- and anti-inflammatory cytokine secretions. Upon testosterone treatment, acts as a receptor for CCL21 and subsequently triggers through G(q)-alpha and G(12)/G(13) proteins a calcium flux leading to chemotactic effects on activated B-cells. Signals via GNA13 and PKA to promote CD86 up-regulation by follicular B-cells.</text>
</comment>
<comment type="subunit">
    <text evidence="1">Interacts with GNA13. Interacts with CCL21.</text>
</comment>
<comment type="subcellular location">
    <subcellularLocation>
        <location>Cell membrane</location>
        <topology>Multi-pass membrane protein</topology>
    </subcellularLocation>
</comment>
<comment type="similarity">
    <text evidence="3">Belongs to the G-protein coupled receptor 1 family.</text>
</comment>
<name>GP174_HUMAN</name>
<organism>
    <name type="scientific">Homo sapiens</name>
    <name type="common">Human</name>
    <dbReference type="NCBI Taxonomy" id="9606"/>
    <lineage>
        <taxon>Eukaryota</taxon>
        <taxon>Metazoa</taxon>
        <taxon>Chordata</taxon>
        <taxon>Craniata</taxon>
        <taxon>Vertebrata</taxon>
        <taxon>Euteleostomi</taxon>
        <taxon>Mammalia</taxon>
        <taxon>Eutheria</taxon>
        <taxon>Euarchontoglires</taxon>
        <taxon>Primates</taxon>
        <taxon>Haplorrhini</taxon>
        <taxon>Catarrhini</taxon>
        <taxon>Hominidae</taxon>
        <taxon>Homo</taxon>
    </lineage>
</organism>
<proteinExistence type="evidence at protein level"/>
<evidence type="ECO:0000250" key="1">
    <source>
        <dbReference type="UniProtKB" id="Q3U507"/>
    </source>
</evidence>
<evidence type="ECO:0000255" key="2"/>
<evidence type="ECO:0000255" key="3">
    <source>
        <dbReference type="PROSITE-ProRule" id="PRU00521"/>
    </source>
</evidence>
<evidence type="ECO:0000269" key="4">
    <source>
    </source>
</evidence>
<evidence type="ECO:0007744" key="5">
    <source>
        <dbReference type="PDB" id="7XV3"/>
    </source>
</evidence>
<evidence type="ECO:0007829" key="6">
    <source>
        <dbReference type="PDB" id="7XV3"/>
    </source>
</evidence>
<evidence type="ECO:0007829" key="7">
    <source>
        <dbReference type="PDB" id="8KH5"/>
    </source>
</evidence>
<reference key="1">
    <citation type="submission" date="2001-02" db="EMBL/GenBank/DDBJ databases">
        <title>Cloning and characterization of FKSG79, a novel gene encoding a putative purinergic receptor.</title>
        <authorList>
            <person name="Wang Y.-G."/>
            <person name="Gong L."/>
        </authorList>
    </citation>
    <scope>NUCLEOTIDE SEQUENCE [MRNA]</scope>
</reference>
<reference key="2">
    <citation type="journal article" date="2002" name="FEBS Lett.">
        <title>Identification of G protein-coupled receptor genes from the human genome sequence.</title>
        <authorList>
            <person name="Takeda S."/>
            <person name="Kadowaki S."/>
            <person name="Haga T."/>
            <person name="Takaesu H."/>
            <person name="Mitaku S."/>
        </authorList>
    </citation>
    <scope>NUCLEOTIDE SEQUENCE [LARGE SCALE GENOMIC DNA]</scope>
</reference>
<reference key="3">
    <citation type="submission" date="2003-02" db="EMBL/GenBank/DDBJ databases">
        <title>cDNA clones of human proteins involved in signal transduction sequenced by the Guthrie cDNA resource center (www.cdna.org).</title>
        <authorList>
            <person name="Warren C.N."/>
            <person name="Aronstam R.S."/>
            <person name="Sharma S.V."/>
        </authorList>
    </citation>
    <scope>NUCLEOTIDE SEQUENCE [GENOMIC DNA]</scope>
</reference>
<reference key="4">
    <citation type="journal article" date="2005" name="Nature">
        <title>The DNA sequence of the human X chromosome.</title>
        <authorList>
            <person name="Ross M.T."/>
            <person name="Grafham D.V."/>
            <person name="Coffey A.J."/>
            <person name="Scherer S."/>
            <person name="McLay K."/>
            <person name="Muzny D."/>
            <person name="Platzer M."/>
            <person name="Howell G.R."/>
            <person name="Burrows C."/>
            <person name="Bird C.P."/>
            <person name="Frankish A."/>
            <person name="Lovell F.L."/>
            <person name="Howe K.L."/>
            <person name="Ashurst J.L."/>
            <person name="Fulton R.S."/>
            <person name="Sudbrak R."/>
            <person name="Wen G."/>
            <person name="Jones M.C."/>
            <person name="Hurles M.E."/>
            <person name="Andrews T.D."/>
            <person name="Scott C.E."/>
            <person name="Searle S."/>
            <person name="Ramser J."/>
            <person name="Whittaker A."/>
            <person name="Deadman R."/>
            <person name="Carter N.P."/>
            <person name="Hunt S.E."/>
            <person name="Chen R."/>
            <person name="Cree A."/>
            <person name="Gunaratne P."/>
            <person name="Havlak P."/>
            <person name="Hodgson A."/>
            <person name="Metzker M.L."/>
            <person name="Richards S."/>
            <person name="Scott G."/>
            <person name="Steffen D."/>
            <person name="Sodergren E."/>
            <person name="Wheeler D.A."/>
            <person name="Worley K.C."/>
            <person name="Ainscough R."/>
            <person name="Ambrose K.D."/>
            <person name="Ansari-Lari M.A."/>
            <person name="Aradhya S."/>
            <person name="Ashwell R.I."/>
            <person name="Babbage A.K."/>
            <person name="Bagguley C.L."/>
            <person name="Ballabio A."/>
            <person name="Banerjee R."/>
            <person name="Barker G.E."/>
            <person name="Barlow K.F."/>
            <person name="Barrett I.P."/>
            <person name="Bates K.N."/>
            <person name="Beare D.M."/>
            <person name="Beasley H."/>
            <person name="Beasley O."/>
            <person name="Beck A."/>
            <person name="Bethel G."/>
            <person name="Blechschmidt K."/>
            <person name="Brady N."/>
            <person name="Bray-Allen S."/>
            <person name="Bridgeman A.M."/>
            <person name="Brown A.J."/>
            <person name="Brown M.J."/>
            <person name="Bonnin D."/>
            <person name="Bruford E.A."/>
            <person name="Buhay C."/>
            <person name="Burch P."/>
            <person name="Burford D."/>
            <person name="Burgess J."/>
            <person name="Burrill W."/>
            <person name="Burton J."/>
            <person name="Bye J.M."/>
            <person name="Carder C."/>
            <person name="Carrel L."/>
            <person name="Chako J."/>
            <person name="Chapman J.C."/>
            <person name="Chavez D."/>
            <person name="Chen E."/>
            <person name="Chen G."/>
            <person name="Chen Y."/>
            <person name="Chen Z."/>
            <person name="Chinault C."/>
            <person name="Ciccodicola A."/>
            <person name="Clark S.Y."/>
            <person name="Clarke G."/>
            <person name="Clee C.M."/>
            <person name="Clegg S."/>
            <person name="Clerc-Blankenburg K."/>
            <person name="Clifford K."/>
            <person name="Cobley V."/>
            <person name="Cole C.G."/>
            <person name="Conquer J.S."/>
            <person name="Corby N."/>
            <person name="Connor R.E."/>
            <person name="David R."/>
            <person name="Davies J."/>
            <person name="Davis C."/>
            <person name="Davis J."/>
            <person name="Delgado O."/>
            <person name="Deshazo D."/>
            <person name="Dhami P."/>
            <person name="Ding Y."/>
            <person name="Dinh H."/>
            <person name="Dodsworth S."/>
            <person name="Draper H."/>
            <person name="Dugan-Rocha S."/>
            <person name="Dunham A."/>
            <person name="Dunn M."/>
            <person name="Durbin K.J."/>
            <person name="Dutta I."/>
            <person name="Eades T."/>
            <person name="Ellwood M."/>
            <person name="Emery-Cohen A."/>
            <person name="Errington H."/>
            <person name="Evans K.L."/>
            <person name="Faulkner L."/>
            <person name="Francis F."/>
            <person name="Frankland J."/>
            <person name="Fraser A.E."/>
            <person name="Galgoczy P."/>
            <person name="Gilbert J."/>
            <person name="Gill R."/>
            <person name="Gloeckner G."/>
            <person name="Gregory S.G."/>
            <person name="Gribble S."/>
            <person name="Griffiths C."/>
            <person name="Grocock R."/>
            <person name="Gu Y."/>
            <person name="Gwilliam R."/>
            <person name="Hamilton C."/>
            <person name="Hart E.A."/>
            <person name="Hawes A."/>
            <person name="Heath P.D."/>
            <person name="Heitmann K."/>
            <person name="Hennig S."/>
            <person name="Hernandez J."/>
            <person name="Hinzmann B."/>
            <person name="Ho S."/>
            <person name="Hoffs M."/>
            <person name="Howden P.J."/>
            <person name="Huckle E.J."/>
            <person name="Hume J."/>
            <person name="Hunt P.J."/>
            <person name="Hunt A.R."/>
            <person name="Isherwood J."/>
            <person name="Jacob L."/>
            <person name="Johnson D."/>
            <person name="Jones S."/>
            <person name="de Jong P.J."/>
            <person name="Joseph S.S."/>
            <person name="Keenan S."/>
            <person name="Kelly S."/>
            <person name="Kershaw J.K."/>
            <person name="Khan Z."/>
            <person name="Kioschis P."/>
            <person name="Klages S."/>
            <person name="Knights A.J."/>
            <person name="Kosiura A."/>
            <person name="Kovar-Smith C."/>
            <person name="Laird G.K."/>
            <person name="Langford C."/>
            <person name="Lawlor S."/>
            <person name="Leversha M."/>
            <person name="Lewis L."/>
            <person name="Liu W."/>
            <person name="Lloyd C."/>
            <person name="Lloyd D.M."/>
            <person name="Loulseged H."/>
            <person name="Loveland J.E."/>
            <person name="Lovell J.D."/>
            <person name="Lozado R."/>
            <person name="Lu J."/>
            <person name="Lyne R."/>
            <person name="Ma J."/>
            <person name="Maheshwari M."/>
            <person name="Matthews L.H."/>
            <person name="McDowall J."/>
            <person name="McLaren S."/>
            <person name="McMurray A."/>
            <person name="Meidl P."/>
            <person name="Meitinger T."/>
            <person name="Milne S."/>
            <person name="Miner G."/>
            <person name="Mistry S.L."/>
            <person name="Morgan M."/>
            <person name="Morris S."/>
            <person name="Mueller I."/>
            <person name="Mullikin J.C."/>
            <person name="Nguyen N."/>
            <person name="Nordsiek G."/>
            <person name="Nyakatura G."/>
            <person name="O'dell C.N."/>
            <person name="Okwuonu G."/>
            <person name="Palmer S."/>
            <person name="Pandian R."/>
            <person name="Parker D."/>
            <person name="Parrish J."/>
            <person name="Pasternak S."/>
            <person name="Patel D."/>
            <person name="Pearce A.V."/>
            <person name="Pearson D.M."/>
            <person name="Pelan S.E."/>
            <person name="Perez L."/>
            <person name="Porter K.M."/>
            <person name="Ramsey Y."/>
            <person name="Reichwald K."/>
            <person name="Rhodes S."/>
            <person name="Ridler K.A."/>
            <person name="Schlessinger D."/>
            <person name="Schueler M.G."/>
            <person name="Sehra H.K."/>
            <person name="Shaw-Smith C."/>
            <person name="Shen H."/>
            <person name="Sheridan E.M."/>
            <person name="Shownkeen R."/>
            <person name="Skuce C.D."/>
            <person name="Smith M.L."/>
            <person name="Sotheran E.C."/>
            <person name="Steingruber H.E."/>
            <person name="Steward C.A."/>
            <person name="Storey R."/>
            <person name="Swann R.M."/>
            <person name="Swarbreck D."/>
            <person name="Tabor P.E."/>
            <person name="Taudien S."/>
            <person name="Taylor T."/>
            <person name="Teague B."/>
            <person name="Thomas K."/>
            <person name="Thorpe A."/>
            <person name="Timms K."/>
            <person name="Tracey A."/>
            <person name="Trevanion S."/>
            <person name="Tromans A.C."/>
            <person name="d'Urso M."/>
            <person name="Verduzco D."/>
            <person name="Villasana D."/>
            <person name="Waldron L."/>
            <person name="Wall M."/>
            <person name="Wang Q."/>
            <person name="Warren J."/>
            <person name="Warry G.L."/>
            <person name="Wei X."/>
            <person name="West A."/>
            <person name="Whitehead S.L."/>
            <person name="Whiteley M.N."/>
            <person name="Wilkinson J.E."/>
            <person name="Willey D.L."/>
            <person name="Williams G."/>
            <person name="Williams L."/>
            <person name="Williamson A."/>
            <person name="Williamson H."/>
            <person name="Wilming L."/>
            <person name="Woodmansey R.L."/>
            <person name="Wray P.W."/>
            <person name="Yen J."/>
            <person name="Zhang J."/>
            <person name="Zhou J."/>
            <person name="Zoghbi H."/>
            <person name="Zorilla S."/>
            <person name="Buck D."/>
            <person name="Reinhardt R."/>
            <person name="Poustka A."/>
            <person name="Rosenthal A."/>
            <person name="Lehrach H."/>
            <person name="Meindl A."/>
            <person name="Minx P.J."/>
            <person name="Hillier L.W."/>
            <person name="Willard H.F."/>
            <person name="Wilson R.K."/>
            <person name="Waterston R.H."/>
            <person name="Rice C.M."/>
            <person name="Vaudin M."/>
            <person name="Coulson A."/>
            <person name="Nelson D.L."/>
            <person name="Weinstock G."/>
            <person name="Sulston J.E."/>
            <person name="Durbin R.M."/>
            <person name="Hubbard T."/>
            <person name="Gibbs R.A."/>
            <person name="Beck S."/>
            <person name="Rogers J."/>
            <person name="Bentley D.R."/>
        </authorList>
    </citation>
    <scope>NUCLEOTIDE SEQUENCE [LARGE SCALE GENOMIC DNA]</scope>
</reference>
<reference key="5">
    <citation type="journal article" date="2004" name="Genome Res.">
        <title>The status, quality, and expansion of the NIH full-length cDNA project: the Mammalian Gene Collection (MGC).</title>
        <authorList>
            <consortium name="The MGC Project Team"/>
        </authorList>
    </citation>
    <scope>NUCLEOTIDE SEQUENCE [LARGE SCALE MRNA]</scope>
    <source>
        <tissue>Brain</tissue>
    </source>
</reference>
<reference evidence="5" key="6">
    <citation type="journal article" date="2023" name="Nat. Commun.">
        <title>Structural basis of lysophosphatidylserine receptor GPR174 ligand recognition and activation.</title>
        <authorList>
            <person name="Liang J."/>
            <person name="Inoue A."/>
            <person name="Ikuta T."/>
            <person name="Xia R."/>
            <person name="Wang N."/>
            <person name="Kawakami K."/>
            <person name="Xu Z."/>
            <person name="Qian Y."/>
            <person name="Zhu X."/>
            <person name="Zhang A."/>
            <person name="Guo C."/>
            <person name="Huang Z."/>
            <person name="He Y."/>
        </authorList>
    </citation>
    <scope>STRUCTURE BY ELECTRON MICROSCOPY (2.76 ANGSTROMS)</scope>
    <scope>DISULFIDE BONDS</scope>
    <scope>FUNCTION</scope>
    <scope>MUTAGENESIS OF TYR-22; ARG-75; LYS-98 AND ARG-156</scope>
</reference>
<feature type="chain" id="PRO_0000069654" description="Probable G-protein coupled receptor 174">
    <location>
        <begin position="1"/>
        <end position="333"/>
    </location>
</feature>
<feature type="topological domain" description="Extracellular" evidence="2">
    <location>
        <begin position="1"/>
        <end position="27"/>
    </location>
</feature>
<feature type="transmembrane region" description="Helical; Name=1" evidence="2">
    <location>
        <begin position="28"/>
        <end position="48"/>
    </location>
</feature>
<feature type="topological domain" description="Cytoplasmic" evidence="2">
    <location>
        <begin position="49"/>
        <end position="53"/>
    </location>
</feature>
<feature type="transmembrane region" description="Helical; Name=2" evidence="2">
    <location>
        <begin position="54"/>
        <end position="74"/>
    </location>
</feature>
<feature type="topological domain" description="Extracellular" evidence="2">
    <location>
        <begin position="75"/>
        <end position="91"/>
    </location>
</feature>
<feature type="transmembrane region" description="Helical; Name=3" evidence="2">
    <location>
        <begin position="92"/>
        <end position="112"/>
    </location>
</feature>
<feature type="topological domain" description="Cytoplasmic" evidence="2">
    <location>
        <begin position="113"/>
        <end position="134"/>
    </location>
</feature>
<feature type="transmembrane region" description="Helical; Name=4" evidence="2">
    <location>
        <begin position="135"/>
        <end position="155"/>
    </location>
</feature>
<feature type="topological domain" description="Extracellular" evidence="2">
    <location>
        <begin position="156"/>
        <end position="182"/>
    </location>
</feature>
<feature type="transmembrane region" description="Helical; Name=5" evidence="2">
    <location>
        <begin position="183"/>
        <end position="203"/>
    </location>
</feature>
<feature type="topological domain" description="Cytoplasmic" evidence="2">
    <location>
        <begin position="204"/>
        <end position="231"/>
    </location>
</feature>
<feature type="transmembrane region" description="Helical; Name=6" evidence="2">
    <location>
        <begin position="232"/>
        <end position="252"/>
    </location>
</feature>
<feature type="topological domain" description="Extracellular" evidence="2">
    <location>
        <begin position="253"/>
        <end position="269"/>
    </location>
</feature>
<feature type="transmembrane region" description="Helical; Name=7" evidence="2">
    <location>
        <begin position="270"/>
        <end position="290"/>
    </location>
</feature>
<feature type="topological domain" description="Cytoplasmic" evidence="2">
    <location>
        <begin position="291"/>
        <end position="333"/>
    </location>
</feature>
<feature type="glycosylation site" description="N-linked (GlcNAc...) asparagine" evidence="2">
    <location>
        <position position="4"/>
    </location>
</feature>
<feature type="glycosylation site" description="N-linked (GlcNAc...) asparagine" evidence="2">
    <location>
        <position position="164"/>
    </location>
</feature>
<feature type="disulfide bond" evidence="4 5">
    <location>
        <begin position="91"/>
        <end position="168"/>
    </location>
</feature>
<feature type="sequence variant" id="VAR_049409" description="In dbSNP:rs3827440.">
    <original>S</original>
    <variation>P</variation>
    <location>
        <position position="162"/>
    </location>
</feature>
<feature type="mutagenesis site" description="Substantially reduced receptor activity." evidence="4">
    <original>Y</original>
    <variation>A</variation>
    <location>
        <position position="22"/>
    </location>
</feature>
<feature type="mutagenesis site" description="Substantially reduced receptor activity." evidence="4">
    <original>R</original>
    <variation>A</variation>
    <location>
        <position position="75"/>
    </location>
</feature>
<feature type="mutagenesis site" description="Substantially reduced receptor activity." evidence="4">
    <original>K</original>
    <variation>A</variation>
    <location>
        <position position="98"/>
    </location>
</feature>
<feature type="mutagenesis site" description="Substantially reduced receptor activity." evidence="4">
    <original>R</original>
    <variation>A</variation>
    <location>
        <position position="156"/>
    </location>
</feature>
<feature type="turn" evidence="6">
    <location>
        <begin position="16"/>
        <end position="18"/>
    </location>
</feature>
<feature type="helix" evidence="6">
    <location>
        <begin position="19"/>
        <end position="48"/>
    </location>
</feature>
<feature type="helix" evidence="6">
    <location>
        <begin position="57"/>
        <end position="70"/>
    </location>
</feature>
<feature type="helix" evidence="6">
    <location>
        <begin position="73"/>
        <end position="81"/>
    </location>
</feature>
<feature type="helix" evidence="6">
    <location>
        <begin position="88"/>
        <end position="121"/>
    </location>
</feature>
<feature type="helix" evidence="7">
    <location>
        <begin position="123"/>
        <end position="126"/>
    </location>
</feature>
<feature type="strand" evidence="7">
    <location>
        <begin position="128"/>
        <end position="130"/>
    </location>
</feature>
<feature type="helix" evidence="6">
    <location>
        <begin position="134"/>
        <end position="148"/>
    </location>
</feature>
<feature type="helix" evidence="6">
    <location>
        <begin position="151"/>
        <end position="154"/>
    </location>
</feature>
<feature type="strand" evidence="6">
    <location>
        <begin position="168"/>
        <end position="171"/>
    </location>
</feature>
<feature type="helix" evidence="6">
    <location>
        <begin position="179"/>
        <end position="193"/>
    </location>
</feature>
<feature type="helix" evidence="6">
    <location>
        <begin position="195"/>
        <end position="211"/>
    </location>
</feature>
<feature type="strand" evidence="6">
    <location>
        <begin position="219"/>
        <end position="221"/>
    </location>
</feature>
<feature type="helix" evidence="6">
    <location>
        <begin position="224"/>
        <end position="257"/>
    </location>
</feature>
<feature type="helix" evidence="6">
    <location>
        <begin position="264"/>
        <end position="281"/>
    </location>
</feature>
<feature type="helix" evidence="6">
    <location>
        <begin position="284"/>
        <end position="291"/>
    </location>
</feature>
<feature type="strand" evidence="6">
    <location>
        <begin position="292"/>
        <end position="301"/>
    </location>
</feature>
<accession>Q9BXC1</accession>
<accession>Q2M3F7</accession>
<keyword id="KW-0002">3D-structure</keyword>
<keyword id="KW-1003">Cell membrane</keyword>
<keyword id="KW-1015">Disulfide bond</keyword>
<keyword id="KW-0297">G-protein coupled receptor</keyword>
<keyword id="KW-0325">Glycoprotein</keyword>
<keyword id="KW-0472">Membrane</keyword>
<keyword id="KW-1267">Proteomics identification</keyword>
<keyword id="KW-0675">Receptor</keyword>
<keyword id="KW-1185">Reference proteome</keyword>
<keyword id="KW-0807">Transducer</keyword>
<keyword id="KW-0812">Transmembrane</keyword>
<keyword id="KW-1133">Transmembrane helix</keyword>